<protein>
    <recommendedName>
        <fullName>Magnesium-chelatase subunit ChlI, chloroplastic</fullName>
        <shortName>Mg-chelatase subunit I</shortName>
        <ecNumber>6.6.1.1</ecNumber>
    </recommendedName>
    <alternativeName>
        <fullName>Mg-protoporphyrin IX chelatase subunit ChlI</fullName>
    </alternativeName>
    <alternativeName>
        <fullName>Protein CHLORINA 9</fullName>
    </alternativeName>
</protein>
<dbReference type="EC" id="6.6.1.1"/>
<dbReference type="EMBL" id="CM000128">
    <property type="protein sequence ID" value="EAY90669.1"/>
    <property type="molecule type" value="Genomic_DNA"/>
</dbReference>
<dbReference type="SMR" id="A2XIK9"/>
<dbReference type="STRING" id="39946.A2XIK9"/>
<dbReference type="EnsemblPlants" id="BGIOSGA010427-TA">
    <property type="protein sequence ID" value="BGIOSGA010427-PA"/>
    <property type="gene ID" value="BGIOSGA010427"/>
</dbReference>
<dbReference type="EnsemblPlants" id="OsIR64_03g0022980.01">
    <property type="protein sequence ID" value="OsIR64_03g0022980.01"/>
    <property type="gene ID" value="OsIR64_03g0022980"/>
</dbReference>
<dbReference type="EnsemblPlants" id="OsLaMu_03g0023050.01">
    <property type="protein sequence ID" value="OsLaMu_03g0023050.01"/>
    <property type="gene ID" value="OsLaMu_03g0023050"/>
</dbReference>
<dbReference type="EnsemblPlants" id="OsLima_03g0023250.01">
    <property type="protein sequence ID" value="OsLima_03g0023250.01"/>
    <property type="gene ID" value="OsLima_03g0023250"/>
</dbReference>
<dbReference type="EnsemblPlants" id="OsLiXu_03g0023190.01">
    <property type="protein sequence ID" value="OsLiXu_03g0023190.01"/>
    <property type="gene ID" value="OsLiXu_03g0023190"/>
</dbReference>
<dbReference type="EnsemblPlants" id="OsPr106_03g0023210.01">
    <property type="protein sequence ID" value="OsPr106_03g0023210.01"/>
    <property type="gene ID" value="OsPr106_03g0023210"/>
</dbReference>
<dbReference type="Gramene" id="BGIOSGA010427-TA">
    <property type="protein sequence ID" value="BGIOSGA010427-PA"/>
    <property type="gene ID" value="BGIOSGA010427"/>
</dbReference>
<dbReference type="Gramene" id="OsIR64_03g0022980.01">
    <property type="protein sequence ID" value="OsIR64_03g0022980.01"/>
    <property type="gene ID" value="OsIR64_03g0022980"/>
</dbReference>
<dbReference type="Gramene" id="OsLaMu_03g0023050.01">
    <property type="protein sequence ID" value="OsLaMu_03g0023050.01"/>
    <property type="gene ID" value="OsLaMu_03g0023050"/>
</dbReference>
<dbReference type="Gramene" id="OsLima_03g0023250.01">
    <property type="protein sequence ID" value="OsLima_03g0023250.01"/>
    <property type="gene ID" value="OsLima_03g0023250"/>
</dbReference>
<dbReference type="Gramene" id="OsLiXu_03g0023190.01">
    <property type="protein sequence ID" value="OsLiXu_03g0023190.01"/>
    <property type="gene ID" value="OsLiXu_03g0023190"/>
</dbReference>
<dbReference type="Gramene" id="OsPr106_03g0023210.01">
    <property type="protein sequence ID" value="OsPr106_03g0023210.01"/>
    <property type="gene ID" value="OsPr106_03g0023210"/>
</dbReference>
<dbReference type="HOGENOM" id="CLU_016684_0_0_1"/>
<dbReference type="OMA" id="QDEMKLA"/>
<dbReference type="UniPathway" id="UPA00668"/>
<dbReference type="Proteomes" id="UP000007015">
    <property type="component" value="Chromosome 3"/>
</dbReference>
<dbReference type="GO" id="GO:0009570">
    <property type="term" value="C:chloroplast stroma"/>
    <property type="evidence" value="ECO:0007669"/>
    <property type="project" value="TreeGrafter"/>
</dbReference>
<dbReference type="GO" id="GO:0005524">
    <property type="term" value="F:ATP binding"/>
    <property type="evidence" value="ECO:0007669"/>
    <property type="project" value="UniProtKB-KW"/>
</dbReference>
<dbReference type="GO" id="GO:0016887">
    <property type="term" value="F:ATP hydrolysis activity"/>
    <property type="evidence" value="ECO:0007669"/>
    <property type="project" value="InterPro"/>
</dbReference>
<dbReference type="GO" id="GO:0016851">
    <property type="term" value="F:magnesium chelatase activity"/>
    <property type="evidence" value="ECO:0007669"/>
    <property type="project" value="UniProtKB-EC"/>
</dbReference>
<dbReference type="GO" id="GO:0015995">
    <property type="term" value="P:chlorophyll biosynthetic process"/>
    <property type="evidence" value="ECO:0007669"/>
    <property type="project" value="UniProtKB-UniPathway"/>
</dbReference>
<dbReference type="GO" id="GO:0015979">
    <property type="term" value="P:photosynthesis"/>
    <property type="evidence" value="ECO:0007669"/>
    <property type="project" value="UniProtKB-KW"/>
</dbReference>
<dbReference type="FunFam" id="1.10.8.80:FF:000001">
    <property type="entry name" value="Mg-protoporphyrin IX chelatase"/>
    <property type="match status" value="1"/>
</dbReference>
<dbReference type="FunFam" id="3.40.50.300:FF:000601">
    <property type="entry name" value="Mg-protoporphyrin IX chelatase"/>
    <property type="match status" value="1"/>
</dbReference>
<dbReference type="Gene3D" id="1.10.8.80">
    <property type="entry name" value="Magnesium chelatase subunit I, C-Terminal domain"/>
    <property type="match status" value="1"/>
</dbReference>
<dbReference type="Gene3D" id="3.40.50.300">
    <property type="entry name" value="P-loop containing nucleotide triphosphate hydrolases"/>
    <property type="match status" value="1"/>
</dbReference>
<dbReference type="InterPro" id="IPR003593">
    <property type="entry name" value="AAA+_ATPase"/>
</dbReference>
<dbReference type="InterPro" id="IPR045006">
    <property type="entry name" value="CHLI-like"/>
</dbReference>
<dbReference type="InterPro" id="IPR041628">
    <property type="entry name" value="ChlI/MoxR_AAA_lid"/>
</dbReference>
<dbReference type="InterPro" id="IPR011775">
    <property type="entry name" value="Mg_chelatase_ATPase-isu"/>
</dbReference>
<dbReference type="InterPro" id="IPR000523">
    <property type="entry name" value="Mg_chelatse_chII-like_cat_dom"/>
</dbReference>
<dbReference type="InterPro" id="IPR027417">
    <property type="entry name" value="P-loop_NTPase"/>
</dbReference>
<dbReference type="NCBIfam" id="TIGR02030">
    <property type="entry name" value="BchI-ChlI"/>
    <property type="match status" value="1"/>
</dbReference>
<dbReference type="PANTHER" id="PTHR32039">
    <property type="entry name" value="MAGNESIUM-CHELATASE SUBUNIT CHLI"/>
    <property type="match status" value="1"/>
</dbReference>
<dbReference type="PANTHER" id="PTHR32039:SF9">
    <property type="entry name" value="MAGNESIUM-CHELATASE SUBUNIT CHLI-2, CHLOROPLASTIC"/>
    <property type="match status" value="1"/>
</dbReference>
<dbReference type="Pfam" id="PF17863">
    <property type="entry name" value="AAA_lid_2"/>
    <property type="match status" value="1"/>
</dbReference>
<dbReference type="Pfam" id="PF01078">
    <property type="entry name" value="Mg_chelatase"/>
    <property type="match status" value="1"/>
</dbReference>
<dbReference type="SMART" id="SM00382">
    <property type="entry name" value="AAA"/>
    <property type="match status" value="1"/>
</dbReference>
<dbReference type="SUPFAM" id="SSF52540">
    <property type="entry name" value="P-loop containing nucleoside triphosphate hydrolases"/>
    <property type="match status" value="1"/>
</dbReference>
<name>CHLI_ORYSI</name>
<sequence length="415" mass="44850">MASAFSPATAAPAASPALFSASTSRPLSLTAAAAAVSARIPSRRGFRRGRFTVCNVAAPSATQQEAKAAGAKESLRPVYPFAAIVGQDEMKLCLLLNVIDPKIGGVMIMGDRGTGKSTTVRSLVDLLPDIRVVVGDPFNSDPDDPEVMGPEVRERVLEGEKLPVVTAKITMVDLPLGATEDRVCGTIDIEKALTDGVKAFEPGLLAKANRGILYVDEVNLLDDHLVDVLLDSAASGWNTVEREGISISHPARFILIGSGNPEEGELRPQLLDRFGMHAQVGTVRDAELRVKIVEERARFDRDPKAFRESYLEEQDKLQQQISSARSNLGAVQIDHDLRVKISKVCAELNVDGLRGDIVTNRAAKALAALKGRDTVTVEDIATVIPNCLRHRLRKDPLESIDSGLLVVEKFYEVFT</sequence>
<proteinExistence type="inferred from homology"/>
<feature type="transit peptide" description="Chloroplast" evidence="2">
    <location>
        <begin position="1"/>
        <end position="67"/>
    </location>
</feature>
<feature type="chain" id="PRO_0000418772" description="Magnesium-chelatase subunit ChlI, chloroplastic">
    <location>
        <begin position="68"/>
        <end position="415"/>
    </location>
</feature>
<feature type="disulfide bond" evidence="1">
    <location>
        <begin position="93"/>
        <end position="184"/>
    </location>
</feature>
<feature type="disulfide bond" description="Inhibitory under oxidizing conditions" evidence="1">
    <location>
        <begin position="345"/>
        <end position="387"/>
    </location>
</feature>
<organism>
    <name type="scientific">Oryza sativa subsp. indica</name>
    <name type="common">Rice</name>
    <dbReference type="NCBI Taxonomy" id="39946"/>
    <lineage>
        <taxon>Eukaryota</taxon>
        <taxon>Viridiplantae</taxon>
        <taxon>Streptophyta</taxon>
        <taxon>Embryophyta</taxon>
        <taxon>Tracheophyta</taxon>
        <taxon>Spermatophyta</taxon>
        <taxon>Magnoliopsida</taxon>
        <taxon>Liliopsida</taxon>
        <taxon>Poales</taxon>
        <taxon>Poaceae</taxon>
        <taxon>BOP clade</taxon>
        <taxon>Oryzoideae</taxon>
        <taxon>Oryzeae</taxon>
        <taxon>Oryzinae</taxon>
        <taxon>Oryza</taxon>
        <taxon>Oryza sativa</taxon>
    </lineage>
</organism>
<gene>
    <name type="primary">CHLI</name>
    <name type="synonym">CHL9</name>
    <name type="ORF">OsI_12270</name>
</gene>
<comment type="function">
    <text evidence="1">Involved in chlorophyll biosynthesis. Catalyzes the insertion of magnesium ion into protoporphyrin IX to yield Mg-protoporphyrin IX. The reaction takes place in two steps, with an ATP-dependent activation followed by an ATP-dependent chelation step (By similarity).</text>
</comment>
<comment type="catalytic activity">
    <reaction>
        <text>protoporphyrin IX + Mg(2+) + ATP + H2O = Mg-protoporphyrin IX + ADP + phosphate + 3 H(+)</text>
        <dbReference type="Rhea" id="RHEA:13961"/>
        <dbReference type="ChEBI" id="CHEBI:15377"/>
        <dbReference type="ChEBI" id="CHEBI:15378"/>
        <dbReference type="ChEBI" id="CHEBI:18420"/>
        <dbReference type="ChEBI" id="CHEBI:30616"/>
        <dbReference type="ChEBI" id="CHEBI:43474"/>
        <dbReference type="ChEBI" id="CHEBI:57306"/>
        <dbReference type="ChEBI" id="CHEBI:60492"/>
        <dbReference type="ChEBI" id="CHEBI:456216"/>
        <dbReference type="EC" id="6.6.1.1"/>
    </reaction>
</comment>
<comment type="activity regulation">
    <text evidence="1">Redox regulation; active in reducing conditions, inactive in oxidizing conditions. Thioredoxins f and m mediate the reversible reductive activation of oxidized CHLI (By similarity).</text>
</comment>
<comment type="pathway">
    <text>Porphyrin-containing compound metabolism; chlorophyll biosynthesis.</text>
</comment>
<comment type="subunit">
    <text evidence="1">The magnesium chelatase complex is a heterotrimer consisting of subunits CHLI, CHLD and CHLH.</text>
</comment>
<comment type="subcellular location">
    <subcellularLocation>
        <location evidence="1">Plastid</location>
        <location evidence="1">Chloroplast</location>
    </subcellularLocation>
</comment>
<comment type="similarity">
    <text evidence="3">Belongs to the Mg-chelatase subunits D/I family.</text>
</comment>
<accession>A2XIK9</accession>
<keyword id="KW-0067">ATP-binding</keyword>
<keyword id="KW-0149">Chlorophyll biosynthesis</keyword>
<keyword id="KW-0150">Chloroplast</keyword>
<keyword id="KW-1015">Disulfide bond</keyword>
<keyword id="KW-0436">Ligase</keyword>
<keyword id="KW-0547">Nucleotide-binding</keyword>
<keyword id="KW-0602">Photosynthesis</keyword>
<keyword id="KW-0934">Plastid</keyword>
<keyword id="KW-1185">Reference proteome</keyword>
<keyword id="KW-0809">Transit peptide</keyword>
<evidence type="ECO:0000250" key="1"/>
<evidence type="ECO:0000255" key="2"/>
<evidence type="ECO:0000305" key="3"/>
<reference key="1">
    <citation type="journal article" date="2005" name="PLoS Biol.">
        <title>The genomes of Oryza sativa: a history of duplications.</title>
        <authorList>
            <person name="Yu J."/>
            <person name="Wang J."/>
            <person name="Lin W."/>
            <person name="Li S."/>
            <person name="Li H."/>
            <person name="Zhou J."/>
            <person name="Ni P."/>
            <person name="Dong W."/>
            <person name="Hu S."/>
            <person name="Zeng C."/>
            <person name="Zhang J."/>
            <person name="Zhang Y."/>
            <person name="Li R."/>
            <person name="Xu Z."/>
            <person name="Li S."/>
            <person name="Li X."/>
            <person name="Zheng H."/>
            <person name="Cong L."/>
            <person name="Lin L."/>
            <person name="Yin J."/>
            <person name="Geng J."/>
            <person name="Li G."/>
            <person name="Shi J."/>
            <person name="Liu J."/>
            <person name="Lv H."/>
            <person name="Li J."/>
            <person name="Wang J."/>
            <person name="Deng Y."/>
            <person name="Ran L."/>
            <person name="Shi X."/>
            <person name="Wang X."/>
            <person name="Wu Q."/>
            <person name="Li C."/>
            <person name="Ren X."/>
            <person name="Wang J."/>
            <person name="Wang X."/>
            <person name="Li D."/>
            <person name="Liu D."/>
            <person name="Zhang X."/>
            <person name="Ji Z."/>
            <person name="Zhao W."/>
            <person name="Sun Y."/>
            <person name="Zhang Z."/>
            <person name="Bao J."/>
            <person name="Han Y."/>
            <person name="Dong L."/>
            <person name="Ji J."/>
            <person name="Chen P."/>
            <person name="Wu S."/>
            <person name="Liu J."/>
            <person name="Xiao Y."/>
            <person name="Bu D."/>
            <person name="Tan J."/>
            <person name="Yang L."/>
            <person name="Ye C."/>
            <person name="Zhang J."/>
            <person name="Xu J."/>
            <person name="Zhou Y."/>
            <person name="Yu Y."/>
            <person name="Zhang B."/>
            <person name="Zhuang S."/>
            <person name="Wei H."/>
            <person name="Liu B."/>
            <person name="Lei M."/>
            <person name="Yu H."/>
            <person name="Li Y."/>
            <person name="Xu H."/>
            <person name="Wei S."/>
            <person name="He X."/>
            <person name="Fang L."/>
            <person name="Zhang Z."/>
            <person name="Zhang Y."/>
            <person name="Huang X."/>
            <person name="Su Z."/>
            <person name="Tong W."/>
            <person name="Li J."/>
            <person name="Tong Z."/>
            <person name="Li S."/>
            <person name="Ye J."/>
            <person name="Wang L."/>
            <person name="Fang L."/>
            <person name="Lei T."/>
            <person name="Chen C.-S."/>
            <person name="Chen H.-C."/>
            <person name="Xu Z."/>
            <person name="Li H."/>
            <person name="Huang H."/>
            <person name="Zhang F."/>
            <person name="Xu H."/>
            <person name="Li N."/>
            <person name="Zhao C."/>
            <person name="Li S."/>
            <person name="Dong L."/>
            <person name="Huang Y."/>
            <person name="Li L."/>
            <person name="Xi Y."/>
            <person name="Qi Q."/>
            <person name="Li W."/>
            <person name="Zhang B."/>
            <person name="Hu W."/>
            <person name="Zhang Y."/>
            <person name="Tian X."/>
            <person name="Jiao Y."/>
            <person name="Liang X."/>
            <person name="Jin J."/>
            <person name="Gao L."/>
            <person name="Zheng W."/>
            <person name="Hao B."/>
            <person name="Liu S.-M."/>
            <person name="Wang W."/>
            <person name="Yuan L."/>
            <person name="Cao M."/>
            <person name="McDermott J."/>
            <person name="Samudrala R."/>
            <person name="Wang J."/>
            <person name="Wong G.K.-S."/>
            <person name="Yang H."/>
        </authorList>
    </citation>
    <scope>NUCLEOTIDE SEQUENCE [LARGE SCALE GENOMIC DNA]</scope>
    <source>
        <strain>cv. 93-11</strain>
    </source>
</reference>